<keyword id="KW-0002">3D-structure</keyword>
<keyword id="KW-0119">Carbohydrate metabolism</keyword>
<keyword id="KW-1015">Disulfide bond</keyword>
<keyword id="KW-0326">Glycosidase</keyword>
<keyword id="KW-0378">Hydrolase</keyword>
<keyword id="KW-0624">Polysaccharide degradation</keyword>
<keyword id="KW-0873">Pyrrolidone carboxylic acid</keyword>
<keyword id="KW-1185">Reference proteome</keyword>
<keyword id="KW-0964">Secreted</keyword>
<keyword id="KW-0732">Signal</keyword>
<keyword id="KW-0858">Xylan degradation</keyword>
<reference key="1">
    <citation type="journal article" date="2008" name="Nat. Biotechnol.">
        <title>Genome sequencing and analysis of the biomass-degrading fungus Trichoderma reesei (syn. Hypocrea jecorina).</title>
        <authorList>
            <person name="Martinez D."/>
            <person name="Berka R.M."/>
            <person name="Henrissat B."/>
            <person name="Saloheimo M."/>
            <person name="Arvas M."/>
            <person name="Baker S.E."/>
            <person name="Chapman J."/>
            <person name="Chertkov O."/>
            <person name="Coutinho P.M."/>
            <person name="Cullen D."/>
            <person name="Danchin E.G."/>
            <person name="Grigoriev I.V."/>
            <person name="Harris P."/>
            <person name="Jackson M."/>
            <person name="Kubicek C.P."/>
            <person name="Han C.S."/>
            <person name="Ho I."/>
            <person name="Larrondo L.F."/>
            <person name="de Leon A.L."/>
            <person name="Magnuson J.K."/>
            <person name="Merino S."/>
            <person name="Misra M."/>
            <person name="Nelson B."/>
            <person name="Putnam N."/>
            <person name="Robbertse B."/>
            <person name="Salamov A.A."/>
            <person name="Schmoll M."/>
            <person name="Terry A."/>
            <person name="Thayer N."/>
            <person name="Westerholm-Parvinen A."/>
            <person name="Schoch C.L."/>
            <person name="Yao J."/>
            <person name="Barabote R."/>
            <person name="Nelson M.A."/>
            <person name="Detter C."/>
            <person name="Bruce D."/>
            <person name="Kuske C.R."/>
            <person name="Xie G."/>
            <person name="Richardson P."/>
            <person name="Rokhsar D.S."/>
            <person name="Lucas S.M."/>
            <person name="Rubin E.M."/>
            <person name="Dunn-Coleman N."/>
            <person name="Ward M."/>
            <person name="Brettin T.S."/>
        </authorList>
    </citation>
    <scope>NUCLEOTIDE SEQUENCE [LARGE SCALE GENOMIC DNA]</scope>
    <source>
        <strain>QM6a</strain>
    </source>
</reference>
<reference evidence="4" key="2">
    <citation type="submission" date="2015-01" db="PDB data bank">
        <title>Crystal structure of an endo-beta-1,4-xylanase (glycoside hydrolase family 10/GH10) enzyme from Trichoderma reesei.</title>
        <authorList>
            <person name="Stogios P.J."/>
            <person name="Xu X."/>
            <person name="Cui H."/>
            <person name="Savchenko A."/>
        </authorList>
    </citation>
    <scope>X-RAY CRYSTALLOGRAPHY (1.97 ANGSTROMS) OF 47-347</scope>
    <scope>DISULFIDE BOND</scope>
    <source>
        <strain>QM6a</strain>
    </source>
</reference>
<sequence>MKANVILCLLAPLVAALPTETIHLDPELAALRANLTERTADLWDRQASQSIDQLIKRKGKLYFGTATDRGLLQREKNAAIIQADLGQVTPENSMKWQSLENNQGQLNWGDADYLVNFAQQNGKSIRGHTLIWHSQLPAWVNNINNADTLRQVIRTHVSTVVGRYKGKIRAWDVVNEIFNEDGTLRSSVFSRLLGEEFVSIAFRAARDADPSARLYINDYNLDRANYGKVNGLKTYVSKWISQGVPIDGIGSQSHLSGGGGSGTLGALQQLATVPVTELAITELDIQGAPTTDYTQVVQACLSVSKCVGITVWGISDKDSWRASTNPLLFDANFNPKPAYNSIVGILQ</sequence>
<proteinExistence type="evidence at protein level"/>
<accession>G0RA32</accession>
<name>XYN3_HYPJQ</name>
<comment type="function">
    <text evidence="1">Glycoside hydrolase involved in the hydrolysis of xylan, a major plant cell wall hemicellulose made up of 1,4-beta-linked D-xylopyranose residues. Catalyzes the endohydrolysis of the main-chain 1,4-beta-glycosidic bonds connecting the xylose subunits yielding various xylooligosaccharides and xylose. Produces xylobiose and xylotriose as the main degradation products.</text>
</comment>
<comment type="catalytic activity">
    <reaction evidence="1">
        <text>Endohydrolysis of (1-&gt;4)-beta-D-xylosidic linkages in xylans.</text>
        <dbReference type="EC" id="3.2.1.8"/>
    </reaction>
</comment>
<comment type="pathway">
    <text evidence="3">Glycan degradation; xylan degradation.</text>
</comment>
<comment type="subunit">
    <text evidence="1">Monomer.</text>
</comment>
<comment type="subcellular location">
    <subcellularLocation>
        <location evidence="1">Secreted</location>
    </subcellularLocation>
</comment>
<comment type="PTM">
    <text evidence="1">Not glycosylated.</text>
</comment>
<comment type="similarity">
    <text evidence="3">Belongs to the glycosyl hydrolase 10 (cellulase F) family.</text>
</comment>
<dbReference type="EC" id="3.2.1.8" evidence="3"/>
<dbReference type="EMBL" id="GL985057">
    <property type="protein sequence ID" value="EGR52056.1"/>
    <property type="molecule type" value="Genomic_DNA"/>
</dbReference>
<dbReference type="RefSeq" id="XP_006962419.1">
    <property type="nucleotide sequence ID" value="XM_006962357.1"/>
</dbReference>
<dbReference type="PDB" id="4XV0">
    <property type="method" value="X-ray"/>
    <property type="resolution" value="1.97 A"/>
    <property type="chains" value="A=47-347"/>
</dbReference>
<dbReference type="PDBsum" id="4XV0"/>
<dbReference type="SMR" id="G0RA32"/>
<dbReference type="STRING" id="431241.G0RA32"/>
<dbReference type="EnsemblFungi" id="EGR52056">
    <property type="protein sequence ID" value="EGR52056"/>
    <property type="gene ID" value="TRIREDRAFT_120229"/>
</dbReference>
<dbReference type="GeneID" id="18482826"/>
<dbReference type="KEGG" id="tre:TRIREDRAFT_120229"/>
<dbReference type="VEuPathDB" id="FungiDB:TRIREDRAFT_120229"/>
<dbReference type="eggNOG" id="ENOG502QSCW">
    <property type="taxonomic scope" value="Eukaryota"/>
</dbReference>
<dbReference type="HOGENOM" id="CLU_020161_2_0_1"/>
<dbReference type="OrthoDB" id="3055998at2759"/>
<dbReference type="UniPathway" id="UPA00114"/>
<dbReference type="EvolutionaryTrace" id="G0RA32"/>
<dbReference type="Proteomes" id="UP000008984">
    <property type="component" value="Unassembled WGS sequence"/>
</dbReference>
<dbReference type="GO" id="GO:0005576">
    <property type="term" value="C:extracellular region"/>
    <property type="evidence" value="ECO:0007669"/>
    <property type="project" value="UniProtKB-SubCell"/>
</dbReference>
<dbReference type="GO" id="GO:0031176">
    <property type="term" value="F:endo-1,4-beta-xylanase activity"/>
    <property type="evidence" value="ECO:0007669"/>
    <property type="project" value="UniProtKB-EC"/>
</dbReference>
<dbReference type="GO" id="GO:0045493">
    <property type="term" value="P:xylan catabolic process"/>
    <property type="evidence" value="ECO:0007669"/>
    <property type="project" value="UniProtKB-UniPathway"/>
</dbReference>
<dbReference type="Gene3D" id="3.20.20.80">
    <property type="entry name" value="Glycosidases"/>
    <property type="match status" value="1"/>
</dbReference>
<dbReference type="InterPro" id="IPR044846">
    <property type="entry name" value="GH10"/>
</dbReference>
<dbReference type="InterPro" id="IPR001000">
    <property type="entry name" value="GH10_dom"/>
</dbReference>
<dbReference type="InterPro" id="IPR017853">
    <property type="entry name" value="Glycoside_hydrolase_SF"/>
</dbReference>
<dbReference type="PANTHER" id="PTHR31490:SF76">
    <property type="entry name" value="ENDO-1,4-BETA-XYLANASE C"/>
    <property type="match status" value="1"/>
</dbReference>
<dbReference type="PANTHER" id="PTHR31490">
    <property type="entry name" value="GLYCOSYL HYDROLASE"/>
    <property type="match status" value="1"/>
</dbReference>
<dbReference type="Pfam" id="PF00331">
    <property type="entry name" value="Glyco_hydro_10"/>
    <property type="match status" value="1"/>
</dbReference>
<dbReference type="PRINTS" id="PR00134">
    <property type="entry name" value="GLHYDRLASE10"/>
</dbReference>
<dbReference type="SMART" id="SM00633">
    <property type="entry name" value="Glyco_10"/>
    <property type="match status" value="1"/>
</dbReference>
<dbReference type="SUPFAM" id="SSF51445">
    <property type="entry name" value="(Trans)glycosidases"/>
    <property type="match status" value="1"/>
</dbReference>
<dbReference type="PROSITE" id="PS51760">
    <property type="entry name" value="GH10_2"/>
    <property type="match status" value="1"/>
</dbReference>
<feature type="signal peptide" evidence="2">
    <location>
        <begin position="1"/>
        <end position="16"/>
    </location>
</feature>
<feature type="propeptide" id="PRO_0000436705" evidence="1">
    <location>
        <begin position="17"/>
        <end position="45"/>
    </location>
</feature>
<feature type="chain" id="PRO_5003408236" description="Endo-1,4-beta-xylanase 3">
    <location>
        <begin position="46"/>
        <end position="347"/>
    </location>
</feature>
<feature type="domain" description="GH10" evidence="3">
    <location>
        <begin position="46"/>
        <end position="345"/>
    </location>
</feature>
<feature type="active site" description="Proton donor" evidence="3">
    <location>
        <position position="176"/>
    </location>
</feature>
<feature type="active site" description="Nucleophile" evidence="3">
    <location>
        <position position="282"/>
    </location>
</feature>
<feature type="modified residue" description="Pyrrolidone carboxylic acid" evidence="1">
    <location>
        <position position="46"/>
    </location>
</feature>
<feature type="disulfide bond" evidence="4">
    <location>
        <begin position="300"/>
        <end position="306"/>
    </location>
</feature>
<feature type="helix" evidence="5">
    <location>
        <begin position="51"/>
        <end position="57"/>
    </location>
</feature>
<feature type="strand" evidence="5">
    <location>
        <begin position="61"/>
        <end position="67"/>
    </location>
</feature>
<feature type="helix" evidence="5">
    <location>
        <begin position="69"/>
        <end position="72"/>
    </location>
</feature>
<feature type="helix" evidence="5">
    <location>
        <begin position="77"/>
        <end position="84"/>
    </location>
</feature>
<feature type="strand" evidence="5">
    <location>
        <begin position="86"/>
        <end position="92"/>
    </location>
</feature>
<feature type="helix" evidence="5">
    <location>
        <begin position="96"/>
        <end position="100"/>
    </location>
</feature>
<feature type="helix" evidence="5">
    <location>
        <begin position="109"/>
        <end position="121"/>
    </location>
</feature>
<feature type="strand" evidence="5">
    <location>
        <begin position="124"/>
        <end position="135"/>
    </location>
</feature>
<feature type="helix" evidence="5">
    <location>
        <begin position="138"/>
        <end position="141"/>
    </location>
</feature>
<feature type="helix" evidence="5">
    <location>
        <begin position="146"/>
        <end position="163"/>
    </location>
</feature>
<feature type="turn" evidence="5">
    <location>
        <begin position="164"/>
        <end position="167"/>
    </location>
</feature>
<feature type="strand" evidence="5">
    <location>
        <begin position="169"/>
        <end position="176"/>
    </location>
</feature>
<feature type="strand" evidence="5">
    <location>
        <begin position="182"/>
        <end position="184"/>
    </location>
</feature>
<feature type="helix" evidence="5">
    <location>
        <begin position="188"/>
        <end position="193"/>
    </location>
</feature>
<feature type="helix" evidence="5">
    <location>
        <begin position="196"/>
        <end position="208"/>
    </location>
</feature>
<feature type="strand" evidence="5">
    <location>
        <begin position="212"/>
        <end position="219"/>
    </location>
</feature>
<feature type="helix" evidence="5">
    <location>
        <begin position="227"/>
        <end position="241"/>
    </location>
</feature>
<feature type="strand" evidence="5">
    <location>
        <begin position="248"/>
        <end position="251"/>
    </location>
</feature>
<feature type="helix" evidence="5">
    <location>
        <begin position="259"/>
        <end position="262"/>
    </location>
</feature>
<feature type="helix" evidence="5">
    <location>
        <begin position="263"/>
        <end position="271"/>
    </location>
</feature>
<feature type="strand" evidence="5">
    <location>
        <begin position="276"/>
        <end position="285"/>
    </location>
</feature>
<feature type="helix" evidence="5">
    <location>
        <begin position="290"/>
        <end position="302"/>
    </location>
</feature>
<feature type="strand" evidence="5">
    <location>
        <begin position="306"/>
        <end position="312"/>
    </location>
</feature>
<feature type="helix" evidence="5">
    <location>
        <begin position="316"/>
        <end position="318"/>
    </location>
</feature>
<feature type="helix" evidence="5">
    <location>
        <begin position="322"/>
        <end position="324"/>
    </location>
</feature>
<feature type="strand" evidence="5">
    <location>
        <begin position="327"/>
        <end position="329"/>
    </location>
</feature>
<feature type="helix" evidence="5">
    <location>
        <begin position="337"/>
        <end position="346"/>
    </location>
</feature>
<organism>
    <name type="scientific">Hypocrea jecorina (strain QM6a)</name>
    <name type="common">Trichoderma reesei</name>
    <dbReference type="NCBI Taxonomy" id="431241"/>
    <lineage>
        <taxon>Eukaryota</taxon>
        <taxon>Fungi</taxon>
        <taxon>Dikarya</taxon>
        <taxon>Ascomycota</taxon>
        <taxon>Pezizomycotina</taxon>
        <taxon>Sordariomycetes</taxon>
        <taxon>Hypocreomycetidae</taxon>
        <taxon>Hypocreales</taxon>
        <taxon>Hypocreaceae</taxon>
        <taxon>Trichoderma</taxon>
    </lineage>
</organism>
<evidence type="ECO:0000250" key="1">
    <source>
        <dbReference type="UniProtKB" id="Q9P973"/>
    </source>
</evidence>
<evidence type="ECO:0000255" key="2"/>
<evidence type="ECO:0000255" key="3">
    <source>
        <dbReference type="PROSITE-ProRule" id="PRU01096"/>
    </source>
</evidence>
<evidence type="ECO:0007744" key="4">
    <source>
        <dbReference type="PDB" id="4XV0"/>
    </source>
</evidence>
<evidence type="ECO:0007829" key="5">
    <source>
        <dbReference type="PDB" id="4XV0"/>
    </source>
</evidence>
<protein>
    <recommendedName>
        <fullName>Endo-1,4-beta-xylanase 3</fullName>
        <shortName>Xylanase 3</shortName>
        <ecNumber evidence="3">3.2.1.8</ecNumber>
    </recommendedName>
    <alternativeName>
        <fullName>1,4-beta-D-xylan xylanohydrolase 3</fullName>
    </alternativeName>
</protein>
<gene>
    <name type="primary">xyn3</name>
    <name type="ORF">TRIREDRAFT_120229</name>
</gene>